<feature type="chain" id="PRO_0000161919" description="23S rRNA (uracil(1939)-C(5))-methyltransferase RlmD">
    <location>
        <begin position="1"/>
        <end position="438"/>
    </location>
</feature>
<feature type="domain" description="TRAM" evidence="1">
    <location>
        <begin position="11"/>
        <end position="69"/>
    </location>
</feature>
<feature type="active site" description="Nucleophile" evidence="1">
    <location>
        <position position="396"/>
    </location>
</feature>
<feature type="binding site" evidence="1">
    <location>
        <position position="82"/>
    </location>
    <ligand>
        <name>[4Fe-4S] cluster</name>
        <dbReference type="ChEBI" id="CHEBI:49883"/>
    </ligand>
</feature>
<feature type="binding site" evidence="1">
    <location>
        <position position="88"/>
    </location>
    <ligand>
        <name>[4Fe-4S] cluster</name>
        <dbReference type="ChEBI" id="CHEBI:49883"/>
    </ligand>
</feature>
<feature type="binding site" evidence="1">
    <location>
        <position position="91"/>
    </location>
    <ligand>
        <name>[4Fe-4S] cluster</name>
        <dbReference type="ChEBI" id="CHEBI:49883"/>
    </ligand>
</feature>
<feature type="binding site" evidence="1">
    <location>
        <position position="169"/>
    </location>
    <ligand>
        <name>[4Fe-4S] cluster</name>
        <dbReference type="ChEBI" id="CHEBI:49883"/>
    </ligand>
</feature>
<feature type="binding site" evidence="1">
    <location>
        <position position="272"/>
    </location>
    <ligand>
        <name>S-adenosyl-L-methionine</name>
        <dbReference type="ChEBI" id="CHEBI:59789"/>
    </ligand>
</feature>
<feature type="binding site" evidence="1">
    <location>
        <position position="301"/>
    </location>
    <ligand>
        <name>S-adenosyl-L-methionine</name>
        <dbReference type="ChEBI" id="CHEBI:59789"/>
    </ligand>
</feature>
<feature type="binding site" evidence="1">
    <location>
        <position position="306"/>
    </location>
    <ligand>
        <name>S-adenosyl-L-methionine</name>
        <dbReference type="ChEBI" id="CHEBI:59789"/>
    </ligand>
</feature>
<feature type="binding site" evidence="1">
    <location>
        <position position="322"/>
    </location>
    <ligand>
        <name>S-adenosyl-L-methionine</name>
        <dbReference type="ChEBI" id="CHEBI:59789"/>
    </ligand>
</feature>
<feature type="binding site" evidence="1">
    <location>
        <position position="349"/>
    </location>
    <ligand>
        <name>S-adenosyl-L-methionine</name>
        <dbReference type="ChEBI" id="CHEBI:59789"/>
    </ligand>
</feature>
<feature type="binding site" evidence="1">
    <location>
        <position position="370"/>
    </location>
    <ligand>
        <name>S-adenosyl-L-methionine</name>
        <dbReference type="ChEBI" id="CHEBI:59789"/>
    </ligand>
</feature>
<organism>
    <name type="scientific">Vibrio vulnificus (strain CMCP6)</name>
    <dbReference type="NCBI Taxonomy" id="216895"/>
    <lineage>
        <taxon>Bacteria</taxon>
        <taxon>Pseudomonadati</taxon>
        <taxon>Pseudomonadota</taxon>
        <taxon>Gammaproteobacteria</taxon>
        <taxon>Vibrionales</taxon>
        <taxon>Vibrionaceae</taxon>
        <taxon>Vibrio</taxon>
    </lineage>
</organism>
<protein>
    <recommendedName>
        <fullName evidence="1">23S rRNA (uracil(1939)-C(5))-methyltransferase RlmD</fullName>
        <ecNumber evidence="1">2.1.1.190</ecNumber>
    </recommendedName>
    <alternativeName>
        <fullName evidence="1">23S rRNA(m5U1939)-methyltransferase</fullName>
    </alternativeName>
</protein>
<proteinExistence type="inferred from homology"/>
<sequence>MARFFQPKKKLQPESKHQQVLVEKLDHQGAGIAYLNKKPLFIDGTLPGEEVVTQLTESKSKFARGKLIKLLKPAAERVEPFCSHFNQCGGCDMQHMDYQAQLAYKQRTLLQLMKKFSGSEILLSPPVTGLEKAYRRRARVSLMWDKKSRQLQFGFRRKQSKQIENVTQCPVLVAELECLLPELKAILSHFQHPEHLGHVELVAADNGAVITLRHTGPLLDEDVAKLRQCAEQHQATLYLMPASDQLERISGEAPYYQEIGFKVPFEPNNFIQVNQKVNQQMVVQALEWLDPQSSDRVLDLFCGLGNFSLPIASKAKSVTGVEGVDEMVQKAAINASLNQINNAQFFHANLEQDFVGQPWASEKFDKILLDPARAGASGIIEQVSALGAKRVVYVSCNPATLARDSQSLLEQGYRLTKLGMLDMFPYTSHLESMALFEK</sequence>
<keyword id="KW-0004">4Fe-4S</keyword>
<keyword id="KW-0408">Iron</keyword>
<keyword id="KW-0411">Iron-sulfur</keyword>
<keyword id="KW-0479">Metal-binding</keyword>
<keyword id="KW-0489">Methyltransferase</keyword>
<keyword id="KW-0698">rRNA processing</keyword>
<keyword id="KW-0949">S-adenosyl-L-methionine</keyword>
<keyword id="KW-0808">Transferase</keyword>
<accession>Q8DC67</accession>
<evidence type="ECO:0000255" key="1">
    <source>
        <dbReference type="HAMAP-Rule" id="MF_01010"/>
    </source>
</evidence>
<gene>
    <name evidence="1" type="primary">rlmD</name>
    <name type="synonym">rumA</name>
    <name type="ordered locus">VV1_1574</name>
</gene>
<name>RLMD_VIBVU</name>
<reference key="1">
    <citation type="submission" date="2002-12" db="EMBL/GenBank/DDBJ databases">
        <title>Complete genome sequence of Vibrio vulnificus CMCP6.</title>
        <authorList>
            <person name="Rhee J.H."/>
            <person name="Kim S.Y."/>
            <person name="Chung S.S."/>
            <person name="Kim J.J."/>
            <person name="Moon Y.H."/>
            <person name="Jeong H."/>
            <person name="Choy H.E."/>
        </authorList>
    </citation>
    <scope>NUCLEOTIDE SEQUENCE [LARGE SCALE GENOMIC DNA]</scope>
    <source>
        <strain>CMCP6</strain>
    </source>
</reference>
<dbReference type="EC" id="2.1.1.190" evidence="1"/>
<dbReference type="EMBL" id="AE016795">
    <property type="protein sequence ID" value="AAO09998.1"/>
    <property type="molecule type" value="Genomic_DNA"/>
</dbReference>
<dbReference type="RefSeq" id="WP_011079509.1">
    <property type="nucleotide sequence ID" value="NC_004459.3"/>
</dbReference>
<dbReference type="SMR" id="Q8DC67"/>
<dbReference type="KEGG" id="vvu:VV1_1574"/>
<dbReference type="HOGENOM" id="CLU_014689_8_2_6"/>
<dbReference type="Proteomes" id="UP000002275">
    <property type="component" value="Chromosome 1"/>
</dbReference>
<dbReference type="GO" id="GO:0051539">
    <property type="term" value="F:4 iron, 4 sulfur cluster binding"/>
    <property type="evidence" value="ECO:0007669"/>
    <property type="project" value="UniProtKB-KW"/>
</dbReference>
<dbReference type="GO" id="GO:0005506">
    <property type="term" value="F:iron ion binding"/>
    <property type="evidence" value="ECO:0007669"/>
    <property type="project" value="UniProtKB-UniRule"/>
</dbReference>
<dbReference type="GO" id="GO:0003723">
    <property type="term" value="F:RNA binding"/>
    <property type="evidence" value="ECO:0007669"/>
    <property type="project" value="InterPro"/>
</dbReference>
<dbReference type="GO" id="GO:0070041">
    <property type="term" value="F:rRNA (uridine-C5-)-methyltransferase activity"/>
    <property type="evidence" value="ECO:0007669"/>
    <property type="project" value="UniProtKB-UniRule"/>
</dbReference>
<dbReference type="GO" id="GO:0070475">
    <property type="term" value="P:rRNA base methylation"/>
    <property type="evidence" value="ECO:0007669"/>
    <property type="project" value="TreeGrafter"/>
</dbReference>
<dbReference type="CDD" id="cd02440">
    <property type="entry name" value="AdoMet_MTases"/>
    <property type="match status" value="1"/>
</dbReference>
<dbReference type="FunFam" id="3.40.50.150:FF:000009">
    <property type="entry name" value="23S rRNA (Uracil(1939)-C(5))-methyltransferase RlmD"/>
    <property type="match status" value="1"/>
</dbReference>
<dbReference type="FunFam" id="2.40.50.140:FF:000097">
    <property type="entry name" value="23S rRNA (uracil(1939)-C(5))-methyltransferase RlmD"/>
    <property type="match status" value="1"/>
</dbReference>
<dbReference type="Gene3D" id="2.40.50.1070">
    <property type="match status" value="1"/>
</dbReference>
<dbReference type="Gene3D" id="2.40.50.140">
    <property type="entry name" value="Nucleic acid-binding proteins"/>
    <property type="match status" value="1"/>
</dbReference>
<dbReference type="Gene3D" id="3.40.50.150">
    <property type="entry name" value="Vaccinia Virus protein VP39"/>
    <property type="match status" value="1"/>
</dbReference>
<dbReference type="HAMAP" id="MF_01010">
    <property type="entry name" value="23SrRNA_methyltr_RlmD"/>
    <property type="match status" value="1"/>
</dbReference>
<dbReference type="InterPro" id="IPR001566">
    <property type="entry name" value="23S_rRNA_MeTrfase_RlmD"/>
</dbReference>
<dbReference type="InterPro" id="IPR030390">
    <property type="entry name" value="MeTrfase_TrmA_AS"/>
</dbReference>
<dbReference type="InterPro" id="IPR030391">
    <property type="entry name" value="MeTrfase_TrmA_CS"/>
</dbReference>
<dbReference type="InterPro" id="IPR012340">
    <property type="entry name" value="NA-bd_OB-fold"/>
</dbReference>
<dbReference type="InterPro" id="IPR029063">
    <property type="entry name" value="SAM-dependent_MTases_sf"/>
</dbReference>
<dbReference type="InterPro" id="IPR002792">
    <property type="entry name" value="TRAM_dom"/>
</dbReference>
<dbReference type="InterPro" id="IPR010280">
    <property type="entry name" value="U5_MeTrfase_fam"/>
</dbReference>
<dbReference type="NCBIfam" id="NF009639">
    <property type="entry name" value="PRK13168.1"/>
    <property type="match status" value="1"/>
</dbReference>
<dbReference type="NCBIfam" id="TIGR00479">
    <property type="entry name" value="rumA"/>
    <property type="match status" value="1"/>
</dbReference>
<dbReference type="PANTHER" id="PTHR11061:SF49">
    <property type="entry name" value="23S RRNA (URACIL(1939)-C(5))-METHYLTRANSFERASE RLMD"/>
    <property type="match status" value="1"/>
</dbReference>
<dbReference type="PANTHER" id="PTHR11061">
    <property type="entry name" value="RNA M5U METHYLTRANSFERASE"/>
    <property type="match status" value="1"/>
</dbReference>
<dbReference type="Pfam" id="PF01938">
    <property type="entry name" value="TRAM"/>
    <property type="match status" value="1"/>
</dbReference>
<dbReference type="Pfam" id="PF05958">
    <property type="entry name" value="tRNA_U5-meth_tr"/>
    <property type="match status" value="1"/>
</dbReference>
<dbReference type="SUPFAM" id="SSF50249">
    <property type="entry name" value="Nucleic acid-binding proteins"/>
    <property type="match status" value="1"/>
</dbReference>
<dbReference type="SUPFAM" id="SSF53335">
    <property type="entry name" value="S-adenosyl-L-methionine-dependent methyltransferases"/>
    <property type="match status" value="1"/>
</dbReference>
<dbReference type="PROSITE" id="PS51687">
    <property type="entry name" value="SAM_MT_RNA_M5U"/>
    <property type="match status" value="1"/>
</dbReference>
<dbReference type="PROSITE" id="PS50926">
    <property type="entry name" value="TRAM"/>
    <property type="match status" value="1"/>
</dbReference>
<dbReference type="PROSITE" id="PS01230">
    <property type="entry name" value="TRMA_1"/>
    <property type="match status" value="1"/>
</dbReference>
<dbReference type="PROSITE" id="PS01231">
    <property type="entry name" value="TRMA_2"/>
    <property type="match status" value="1"/>
</dbReference>
<comment type="function">
    <text evidence="1">Catalyzes the formation of 5-methyl-uridine at position 1939 (m5U1939) in 23S rRNA.</text>
</comment>
<comment type="catalytic activity">
    <reaction evidence="1">
        <text>uridine(1939) in 23S rRNA + S-adenosyl-L-methionine = 5-methyluridine(1939) in 23S rRNA + S-adenosyl-L-homocysteine + H(+)</text>
        <dbReference type="Rhea" id="RHEA:42908"/>
        <dbReference type="Rhea" id="RHEA-COMP:10278"/>
        <dbReference type="Rhea" id="RHEA-COMP:10279"/>
        <dbReference type="ChEBI" id="CHEBI:15378"/>
        <dbReference type="ChEBI" id="CHEBI:57856"/>
        <dbReference type="ChEBI" id="CHEBI:59789"/>
        <dbReference type="ChEBI" id="CHEBI:65315"/>
        <dbReference type="ChEBI" id="CHEBI:74447"/>
        <dbReference type="EC" id="2.1.1.190"/>
    </reaction>
</comment>
<comment type="similarity">
    <text evidence="1">Belongs to the class I-like SAM-binding methyltransferase superfamily. RNA M5U methyltransferase family. RlmD subfamily.</text>
</comment>